<keyword id="KW-1185">Reference proteome</keyword>
<protein>
    <recommendedName>
        <fullName evidence="1">Hydrogenase maturation factor HypC</fullName>
    </recommendedName>
</protein>
<name>HYPC_HELHP</name>
<comment type="function">
    <text evidence="1">Involved in the maturation of [NiFe] hydrogenases. Involved in the biosynthesis of the Fe(CN)(2)CO cofactor.</text>
</comment>
<comment type="pathway">
    <text evidence="1">Protein modification; [NiFe] hydrogenase maturation.</text>
</comment>
<comment type="disruption phenotype">
    <text evidence="2">Strains missing this gene do not produce hydrogenase; addition of Ni(2+) to cell cultures does not compensate this loss of function. Interestingly higher than usual urease activity was produced in this strain; this effect was increased by increasing amount of Ni(2+) in cell cultures.</text>
</comment>
<comment type="similarity">
    <text evidence="3">Belongs to the HupF/HypC family.</text>
</comment>
<sequence length="86" mass="9765">MCLAIPSKVVEIKDNNMAVVDTLGVSREASLDLLNESVNIGDWVLLHIGYVMSKIDEESARESLRLYEQILQSMQEEENERIEANK</sequence>
<feature type="chain" id="PRO_0000372091" description="Hydrogenase maturation factor HypC">
    <location>
        <begin position="1"/>
        <end position="86"/>
    </location>
</feature>
<dbReference type="EMBL" id="AE017125">
    <property type="protein sequence ID" value="AAP76921.1"/>
    <property type="molecule type" value="Genomic_DNA"/>
</dbReference>
<dbReference type="RefSeq" id="WP_011115167.1">
    <property type="nucleotide sequence ID" value="NC_004917.1"/>
</dbReference>
<dbReference type="SMR" id="Q7VJB9"/>
<dbReference type="STRING" id="235279.HH_0324"/>
<dbReference type="KEGG" id="hhe:HH_0324"/>
<dbReference type="eggNOG" id="COG0298">
    <property type="taxonomic scope" value="Bacteria"/>
</dbReference>
<dbReference type="HOGENOM" id="CLU_159381_2_0_7"/>
<dbReference type="OrthoDB" id="9806017at2"/>
<dbReference type="UniPathway" id="UPA00335"/>
<dbReference type="Proteomes" id="UP000002495">
    <property type="component" value="Chromosome"/>
</dbReference>
<dbReference type="GO" id="GO:1902670">
    <property type="term" value="F:carbon dioxide binding"/>
    <property type="evidence" value="ECO:0007669"/>
    <property type="project" value="TreeGrafter"/>
</dbReference>
<dbReference type="GO" id="GO:0005506">
    <property type="term" value="F:iron ion binding"/>
    <property type="evidence" value="ECO:0007669"/>
    <property type="project" value="TreeGrafter"/>
</dbReference>
<dbReference type="GO" id="GO:0051604">
    <property type="term" value="P:protein maturation"/>
    <property type="evidence" value="ECO:0007669"/>
    <property type="project" value="TreeGrafter"/>
</dbReference>
<dbReference type="FunFam" id="2.30.30.140:FF:000022">
    <property type="entry name" value="Hydrogenase assembly chaperone HybG"/>
    <property type="match status" value="1"/>
</dbReference>
<dbReference type="Gene3D" id="2.30.30.140">
    <property type="match status" value="1"/>
</dbReference>
<dbReference type="InterPro" id="IPR019812">
    <property type="entry name" value="Hydgase_assmbl_chp_CS"/>
</dbReference>
<dbReference type="InterPro" id="IPR001109">
    <property type="entry name" value="Hydrogenase_HupF/HypC"/>
</dbReference>
<dbReference type="NCBIfam" id="TIGR00074">
    <property type="entry name" value="hypC_hupF"/>
    <property type="match status" value="1"/>
</dbReference>
<dbReference type="PANTHER" id="PTHR35177">
    <property type="entry name" value="HYDROGENASE MATURATION FACTOR HYBG"/>
    <property type="match status" value="1"/>
</dbReference>
<dbReference type="PANTHER" id="PTHR35177:SF2">
    <property type="entry name" value="HYDROGENASE MATURATION FACTOR HYBG"/>
    <property type="match status" value="1"/>
</dbReference>
<dbReference type="Pfam" id="PF01455">
    <property type="entry name" value="HupF_HypC"/>
    <property type="match status" value="1"/>
</dbReference>
<dbReference type="PRINTS" id="PR00445">
    <property type="entry name" value="HUPFHYPC"/>
</dbReference>
<dbReference type="SUPFAM" id="SSF159127">
    <property type="entry name" value="HupF/HypC-like"/>
    <property type="match status" value="1"/>
</dbReference>
<dbReference type="PROSITE" id="PS01097">
    <property type="entry name" value="HUPF_HYPC"/>
    <property type="match status" value="1"/>
</dbReference>
<evidence type="ECO:0000250" key="1">
    <source>
        <dbReference type="UniProtKB" id="P0AAM3"/>
    </source>
</evidence>
<evidence type="ECO:0000269" key="2">
    <source>
    </source>
</evidence>
<evidence type="ECO:0000305" key="3"/>
<proteinExistence type="inferred from homology"/>
<accession>Q7VJB9</accession>
<gene>
    <name type="primary">hypC</name>
    <name type="ordered locus">HH_0324</name>
</gene>
<reference key="1">
    <citation type="journal article" date="2003" name="Proc. Natl. Acad. Sci. U.S.A.">
        <title>The complete genome sequence of the carcinogenic bacterium Helicobacter hepaticus.</title>
        <authorList>
            <person name="Suerbaum S."/>
            <person name="Josenhans C."/>
            <person name="Sterzenbach T."/>
            <person name="Drescher B."/>
            <person name="Brandt P."/>
            <person name="Bell M."/>
            <person name="Droege M."/>
            <person name="Fartmann B."/>
            <person name="Fischer H.-P."/>
            <person name="Ge Z."/>
            <person name="Hoerster A."/>
            <person name="Holland R."/>
            <person name="Klein K."/>
            <person name="Koenig J."/>
            <person name="Macko L."/>
            <person name="Mendz G.L."/>
            <person name="Nyakatura G."/>
            <person name="Schauer D.B."/>
            <person name="Shen Z."/>
            <person name="Weber J."/>
            <person name="Frosch M."/>
            <person name="Fox J.G."/>
        </authorList>
    </citation>
    <scope>NUCLEOTIDE SEQUENCE [LARGE SCALE GENOMIC DNA]</scope>
    <source>
        <strain>ATCC 51449 / 3B1</strain>
    </source>
</reference>
<reference key="2">
    <citation type="journal article" date="2007" name="Microbiology">
        <title>Nickel enzyme maturation in Helicobacter hepaticus: roles of accessory proteins in hydrogenase and urease activities.</title>
        <authorList>
            <person name="Benoit S.L."/>
            <person name="Zbell A.L."/>
            <person name="Maier R.J."/>
        </authorList>
    </citation>
    <scope>DISRUPTION PHENOTYPE</scope>
    <source>
        <strain>ATCC 51449 / 3B1</strain>
    </source>
</reference>
<organism>
    <name type="scientific">Helicobacter hepaticus (strain ATCC 51449 / 3B1)</name>
    <dbReference type="NCBI Taxonomy" id="235279"/>
    <lineage>
        <taxon>Bacteria</taxon>
        <taxon>Pseudomonadati</taxon>
        <taxon>Campylobacterota</taxon>
        <taxon>Epsilonproteobacteria</taxon>
        <taxon>Campylobacterales</taxon>
        <taxon>Helicobacteraceae</taxon>
        <taxon>Helicobacter</taxon>
    </lineage>
</organism>